<evidence type="ECO:0000250" key="1">
    <source>
        <dbReference type="UniProtKB" id="P04798"/>
    </source>
</evidence>
<evidence type="ECO:0000255" key="2"/>
<evidence type="ECO:0000255" key="3">
    <source>
        <dbReference type="PROSITE-ProRule" id="PRU00498"/>
    </source>
</evidence>
<evidence type="ECO:0000269" key="4">
    <source>
    </source>
</evidence>
<evidence type="ECO:0000269" key="5">
    <source>
    </source>
</evidence>
<evidence type="ECO:0000269" key="6">
    <source>
    </source>
</evidence>
<evidence type="ECO:0000269" key="7">
    <source>
    </source>
</evidence>
<evidence type="ECO:0000303" key="8">
    <source>
    </source>
</evidence>
<evidence type="ECO:0000305" key="9"/>
<comment type="function">
    <text evidence="4 6">Cytochrome P450 monooxygenase; part of the gene cluster that mediates the biosynthesis of the bianthraquinone cladofulvin, a conidial pigment not required for virulence but that plays a role in fitness and resistance to environmental stresses including UV light and low-temperature stress (PubMed:24465762, PubMed:27274078). The pathway begins with the synthesis of atrochrysone thioester by the polyketide synthase (PKS) claG. The atrochrysone carboxyl ACP thioesterase claF then breaks the thioester bond and releases the atrochrysone carboxylic acid from claG (PubMed:27274078). This compound is decarboxylated by claH to yield emodin, which is further converted to chrysophanol hydroquinone by the reductase claC and the dehydratase claB (PubMed:27274078). The cytochrome monooxygenase P450 claM then catalyzes the dimerization of nataloe-emodin to cladofulvin (PubMed:27274078).</text>
</comment>
<comment type="catalytic activity">
    <reaction evidence="6">
        <text>2 nataloe emodin + reduced [NADPH--hemoprotein reductase] + O2 = cladofulvin + oxidized [NADPH--hemoprotein reductase] + 2 H2O + H(+)</text>
        <dbReference type="Rhea" id="RHEA:64288"/>
        <dbReference type="Rhea" id="RHEA-COMP:11964"/>
        <dbReference type="Rhea" id="RHEA-COMP:11965"/>
        <dbReference type="ChEBI" id="CHEBI:15377"/>
        <dbReference type="ChEBI" id="CHEBI:15378"/>
        <dbReference type="ChEBI" id="CHEBI:15379"/>
        <dbReference type="ChEBI" id="CHEBI:57618"/>
        <dbReference type="ChEBI" id="CHEBI:58210"/>
        <dbReference type="ChEBI" id="CHEBI:152055"/>
        <dbReference type="ChEBI" id="CHEBI:152057"/>
    </reaction>
    <physiologicalReaction direction="left-to-right" evidence="6">
        <dbReference type="Rhea" id="RHEA:64289"/>
    </physiologicalReaction>
</comment>
<comment type="cofactor">
    <cofactor evidence="1">
        <name>heme</name>
        <dbReference type="ChEBI" id="CHEBI:30413"/>
    </cofactor>
</comment>
<comment type="pathway">
    <text evidence="6">Pigment biosynthesis.</text>
</comment>
<comment type="subcellular location">
    <subcellularLocation>
        <location evidence="2">Membrane</location>
        <topology evidence="2">Single-pass membrane protein</topology>
    </subcellularLocation>
</comment>
<comment type="induction">
    <text evidence="4 5 6 7">Expression is positively regulated by the transcriptional regulator wor1 (PubMed:24521437, PubMed:27274078). Expression is down-regulated during biotrophic growth within tomato leaves (PubMed:27997759). The expression is induced at later stages of infection when conidiophores emerge from the plant and produce conidia (PubMed:24465762).</text>
</comment>
<comment type="similarity">
    <text evidence="9">Belongs to the cytochrome P450 family.</text>
</comment>
<gene>
    <name evidence="8" type="primary">claM</name>
    <name type="ORF">Clafu184398</name>
</gene>
<organism>
    <name type="scientific">Passalora fulva</name>
    <name type="common">Tomato leaf mold</name>
    <name type="synonym">Cladosporium fulvum</name>
    <dbReference type="NCBI Taxonomy" id="5499"/>
    <lineage>
        <taxon>Eukaryota</taxon>
        <taxon>Fungi</taxon>
        <taxon>Dikarya</taxon>
        <taxon>Ascomycota</taxon>
        <taxon>Pezizomycotina</taxon>
        <taxon>Dothideomycetes</taxon>
        <taxon>Dothideomycetidae</taxon>
        <taxon>Mycosphaerellales</taxon>
        <taxon>Mycosphaerellaceae</taxon>
        <taxon>Fulvia</taxon>
    </lineage>
</organism>
<name>CLAM_PASFU</name>
<sequence length="538" mass="60609">MNSTAANVKPEPGLYGPDAAASPAIARYLIQGPSPLSIGLVVLIGAISSFLLQQFLKPAVNPLSPKFTSNTWPWLGSLGMMIGHWTFWKSCIKESKTGQFSFWLGRTHVVGLSGPDARKMFFEHPALDLHKATDLTPLGVNFWPIHAIFTPRDEKFQKSTYWLRTLTHLMKTPNMERCLPGVIQDARTGLEALKRDTPSGIINTPKVWPVVFKQTARVFMADDVTDDPKLWATTLGAIDTILHTFSPFNTLLPWIPEPSMIRRRMARRALLRVSRGIVRDRHASPKSASKNDAVQSLINLGDPDDNISEFMINAAFVGVVNAHVIFPQLLNALAVHLDWQDKVYKEVTEVADQHCKEQCLPLVDKLFHIPLSAWENSFPNAALMMEEISRIWTCFPTARFNTLYESIPIPGTSEVIPARTHAIYNSTEIHFNPKLYDRPASFRPDRFAPESQKTWDKEPHGLNTWGTGQRLCSGMRWAKLQQNILMAVALSLYRLEKCDKDGKPDPSAYEKQQAMDGDLDEEVAFVLPECFVKLIPRE</sequence>
<feature type="chain" id="PRO_0000445890" description="Cytochrome P450 monooxygenase claM">
    <location>
        <begin position="1"/>
        <end position="538"/>
    </location>
</feature>
<feature type="transmembrane region" description="Helical" evidence="2">
    <location>
        <begin position="36"/>
        <end position="56"/>
    </location>
</feature>
<feature type="binding site" description="axial binding residue" evidence="1">
    <location>
        <position position="472"/>
    </location>
    <ligand>
        <name>heme</name>
        <dbReference type="ChEBI" id="CHEBI:30413"/>
    </ligand>
    <ligandPart>
        <name>Fe</name>
        <dbReference type="ChEBI" id="CHEBI:18248"/>
    </ligandPart>
</feature>
<feature type="glycosylation site" description="N-linked (GlcNAc...) asparagine" evidence="3">
    <location>
        <position position="306"/>
    </location>
</feature>
<feature type="glycosylation site" description="N-linked (GlcNAc...) asparagine" evidence="3">
    <location>
        <position position="425"/>
    </location>
</feature>
<proteinExistence type="evidence at protein level"/>
<keyword id="KW-0325">Glycoprotein</keyword>
<keyword id="KW-0349">Heme</keyword>
<keyword id="KW-0408">Iron</keyword>
<keyword id="KW-0472">Membrane</keyword>
<keyword id="KW-0479">Metal-binding</keyword>
<keyword id="KW-0503">Monooxygenase</keyword>
<keyword id="KW-0560">Oxidoreductase</keyword>
<keyword id="KW-0812">Transmembrane</keyword>
<keyword id="KW-1133">Transmembrane helix</keyword>
<accession>P0CU70</accession>
<reference key="1">
    <citation type="journal article" date="2014" name="Mol. Microbiol.">
        <title>Functional analysis of the conserved transcriptional regulator CfWor1 in Cladosporium fulvum reveals diverse roles in the virulence of plant pathogenic fungi.</title>
        <authorList>
            <person name="Okmen B."/>
            <person name="Collemare J."/>
            <person name="Griffiths S."/>
            <person name="van der Burgt A."/>
            <person name="Cox R."/>
            <person name="de Wit P.J."/>
        </authorList>
    </citation>
    <scope>INDUCTION</scope>
</reference>
<reference key="2">
    <citation type="journal article" date="2014" name="PLoS ONE">
        <title>Secondary metabolism and biotrophic lifestyle in the tomato pathogen Cladosporium fulvum.</title>
        <authorList>
            <person name="Collemare J."/>
            <person name="Griffiths S."/>
            <person name="Iida Y."/>
            <person name="Karimi Jashni M."/>
            <person name="Battaglia E."/>
            <person name="Cox R.J."/>
            <person name="de Wit P.J."/>
        </authorList>
    </citation>
    <scope>IDENTIFICATION</scope>
    <scope>FUNCTION</scope>
    <scope>INDUCTION</scope>
</reference>
<reference key="3">
    <citation type="journal article" date="2016" name="Proc. Natl. Acad. Sci. U.S.A.">
        <title>Elucidation of cladofulvin biosynthesis reveals a cytochrome P450 monooxygenase required for anthraquinone dimerization.</title>
        <authorList>
            <person name="Griffiths S."/>
            <person name="Mesarich C.H."/>
            <person name="Saccomanno B."/>
            <person name="Vaisberg A."/>
            <person name="De Wit P.J."/>
            <person name="Cox R."/>
            <person name="Collemare J."/>
        </authorList>
    </citation>
    <scope>INDUCTION</scope>
    <scope>FUNCTION</scope>
    <scope>CATALYTIC ACTIVITY</scope>
    <scope>PATHWAY</scope>
</reference>
<reference key="4">
    <citation type="journal article" date="2018" name="Mol. Plant Pathol.">
        <title>Down-regulation of cladofulvin biosynthesis is required for biotrophic growth of Cladosporium fulvum on tomato.</title>
        <authorList>
            <person name="Griffiths S."/>
            <person name="Mesarich C.H."/>
            <person name="Overdijk E.J.R."/>
            <person name="Saccomanno B."/>
            <person name="de Wit P.J.G.M."/>
            <person name="Collemare J."/>
        </authorList>
    </citation>
    <scope>INDUCTION</scope>
</reference>
<protein>
    <recommendedName>
        <fullName evidence="8">Cytochrome P450 monooxygenase claM</fullName>
        <ecNumber evidence="6">1.14.13.-</ecNumber>
    </recommendedName>
    <alternativeName>
        <fullName evidence="8">Cladofulvin biosynthesis cluster protein M</fullName>
    </alternativeName>
</protein>
<dbReference type="EC" id="1.14.13.-" evidence="6"/>
<dbReference type="SMR" id="P0CU70"/>
<dbReference type="GlyCosmos" id="P0CU70">
    <property type="glycosylation" value="2 sites, No reported glycans"/>
</dbReference>
<dbReference type="OMA" id="ANAGYLC"/>
<dbReference type="OrthoDB" id="1055148at2759"/>
<dbReference type="GO" id="GO:0016020">
    <property type="term" value="C:membrane"/>
    <property type="evidence" value="ECO:0007669"/>
    <property type="project" value="UniProtKB-SubCell"/>
</dbReference>
<dbReference type="GO" id="GO:0020037">
    <property type="term" value="F:heme binding"/>
    <property type="evidence" value="ECO:0007669"/>
    <property type="project" value="InterPro"/>
</dbReference>
<dbReference type="GO" id="GO:0005506">
    <property type="term" value="F:iron ion binding"/>
    <property type="evidence" value="ECO:0007669"/>
    <property type="project" value="InterPro"/>
</dbReference>
<dbReference type="GO" id="GO:0004497">
    <property type="term" value="F:monooxygenase activity"/>
    <property type="evidence" value="ECO:0007669"/>
    <property type="project" value="UniProtKB-KW"/>
</dbReference>
<dbReference type="GO" id="GO:0016705">
    <property type="term" value="F:oxidoreductase activity, acting on paired donors, with incorporation or reduction of molecular oxygen"/>
    <property type="evidence" value="ECO:0007669"/>
    <property type="project" value="InterPro"/>
</dbReference>
<dbReference type="GO" id="GO:0016125">
    <property type="term" value="P:sterol metabolic process"/>
    <property type="evidence" value="ECO:0007669"/>
    <property type="project" value="TreeGrafter"/>
</dbReference>
<dbReference type="CDD" id="cd00302">
    <property type="entry name" value="cytochrome_P450"/>
    <property type="match status" value="1"/>
</dbReference>
<dbReference type="Gene3D" id="1.10.630.10">
    <property type="entry name" value="Cytochrome P450"/>
    <property type="match status" value="1"/>
</dbReference>
<dbReference type="InterPro" id="IPR001128">
    <property type="entry name" value="Cyt_P450"/>
</dbReference>
<dbReference type="InterPro" id="IPR002401">
    <property type="entry name" value="Cyt_P450_E_grp-I"/>
</dbReference>
<dbReference type="InterPro" id="IPR036396">
    <property type="entry name" value="Cyt_P450_sf"/>
</dbReference>
<dbReference type="PANTHER" id="PTHR24286">
    <property type="entry name" value="CYTOCHROME P450 26"/>
    <property type="match status" value="1"/>
</dbReference>
<dbReference type="PANTHER" id="PTHR24286:SF24">
    <property type="entry name" value="LANOSTEROL 14-ALPHA DEMETHYLASE"/>
    <property type="match status" value="1"/>
</dbReference>
<dbReference type="Pfam" id="PF00067">
    <property type="entry name" value="p450"/>
    <property type="match status" value="1"/>
</dbReference>
<dbReference type="PRINTS" id="PR00463">
    <property type="entry name" value="EP450I"/>
</dbReference>
<dbReference type="SUPFAM" id="SSF48264">
    <property type="entry name" value="Cytochrome P450"/>
    <property type="match status" value="1"/>
</dbReference>